<proteinExistence type="inferred from homology"/>
<accession>Q7MX34</accession>
<reference key="1">
    <citation type="journal article" date="2003" name="J. Bacteriol.">
        <title>Complete genome sequence of the oral pathogenic bacterium Porphyromonas gingivalis strain W83.</title>
        <authorList>
            <person name="Nelson K.E."/>
            <person name="Fleischmann R.D."/>
            <person name="DeBoy R.T."/>
            <person name="Paulsen I.T."/>
            <person name="Fouts D.E."/>
            <person name="Eisen J.A."/>
            <person name="Daugherty S.C."/>
            <person name="Dodson R.J."/>
            <person name="Durkin A.S."/>
            <person name="Gwinn M.L."/>
            <person name="Haft D.H."/>
            <person name="Kolonay J.F."/>
            <person name="Nelson W.C."/>
            <person name="Mason T.M."/>
            <person name="Tallon L."/>
            <person name="Gray J."/>
            <person name="Granger D."/>
            <person name="Tettelin H."/>
            <person name="Dong H."/>
            <person name="Galvin J.L."/>
            <person name="Duncan M.J."/>
            <person name="Dewhirst F.E."/>
            <person name="Fraser C.M."/>
        </authorList>
    </citation>
    <scope>NUCLEOTIDE SEQUENCE [LARGE SCALE GENOMIC DNA]</scope>
    <source>
        <strain>ATCC BAA-308 / W83</strain>
    </source>
</reference>
<name>RS21_PORGI</name>
<feature type="chain" id="PRO_0000266726" description="Small ribosomal subunit protein bS21">
    <location>
        <begin position="1"/>
        <end position="63"/>
    </location>
</feature>
<organism>
    <name type="scientific">Porphyromonas gingivalis (strain ATCC BAA-308 / W83)</name>
    <dbReference type="NCBI Taxonomy" id="242619"/>
    <lineage>
        <taxon>Bacteria</taxon>
        <taxon>Pseudomonadati</taxon>
        <taxon>Bacteroidota</taxon>
        <taxon>Bacteroidia</taxon>
        <taxon>Bacteroidales</taxon>
        <taxon>Porphyromonadaceae</taxon>
        <taxon>Porphyromonas</taxon>
    </lineage>
</organism>
<comment type="similarity">
    <text evidence="1">Belongs to the bacterial ribosomal protein bS21 family.</text>
</comment>
<dbReference type="EMBL" id="AE015924">
    <property type="protein sequence ID" value="AAQ65591.1"/>
    <property type="molecule type" value="Genomic_DNA"/>
</dbReference>
<dbReference type="RefSeq" id="WP_004584912.1">
    <property type="nucleotide sequence ID" value="NC_002950.2"/>
</dbReference>
<dbReference type="SMR" id="Q7MX34"/>
<dbReference type="STRING" id="242619.PG_0385"/>
<dbReference type="DNASU" id="2551903"/>
<dbReference type="EnsemblBacteria" id="AAQ65591">
    <property type="protein sequence ID" value="AAQ65591"/>
    <property type="gene ID" value="PG_0385"/>
</dbReference>
<dbReference type="KEGG" id="pgi:PG_0385"/>
<dbReference type="eggNOG" id="COG0828">
    <property type="taxonomic scope" value="Bacteria"/>
</dbReference>
<dbReference type="HOGENOM" id="CLU_159258_2_0_10"/>
<dbReference type="Proteomes" id="UP000000588">
    <property type="component" value="Chromosome"/>
</dbReference>
<dbReference type="GO" id="GO:1990904">
    <property type="term" value="C:ribonucleoprotein complex"/>
    <property type="evidence" value="ECO:0007669"/>
    <property type="project" value="UniProtKB-KW"/>
</dbReference>
<dbReference type="GO" id="GO:0005840">
    <property type="term" value="C:ribosome"/>
    <property type="evidence" value="ECO:0007669"/>
    <property type="project" value="UniProtKB-KW"/>
</dbReference>
<dbReference type="GO" id="GO:0003735">
    <property type="term" value="F:structural constituent of ribosome"/>
    <property type="evidence" value="ECO:0007669"/>
    <property type="project" value="InterPro"/>
</dbReference>
<dbReference type="GO" id="GO:0006412">
    <property type="term" value="P:translation"/>
    <property type="evidence" value="ECO:0007669"/>
    <property type="project" value="UniProtKB-UniRule"/>
</dbReference>
<dbReference type="Gene3D" id="1.20.5.1150">
    <property type="entry name" value="Ribosomal protein S8"/>
    <property type="match status" value="1"/>
</dbReference>
<dbReference type="HAMAP" id="MF_00358">
    <property type="entry name" value="Ribosomal_bS21"/>
    <property type="match status" value="1"/>
</dbReference>
<dbReference type="InterPro" id="IPR001911">
    <property type="entry name" value="Ribosomal_bS21"/>
</dbReference>
<dbReference type="InterPro" id="IPR018278">
    <property type="entry name" value="Ribosomal_bS21_CS"/>
</dbReference>
<dbReference type="InterPro" id="IPR038380">
    <property type="entry name" value="Ribosomal_bS21_sf"/>
</dbReference>
<dbReference type="NCBIfam" id="TIGR00030">
    <property type="entry name" value="S21p"/>
    <property type="match status" value="1"/>
</dbReference>
<dbReference type="Pfam" id="PF01165">
    <property type="entry name" value="Ribosomal_S21"/>
    <property type="match status" value="1"/>
</dbReference>
<dbReference type="PRINTS" id="PR00976">
    <property type="entry name" value="RIBOSOMALS21"/>
</dbReference>
<dbReference type="PROSITE" id="PS01181">
    <property type="entry name" value="RIBOSOMAL_S21"/>
    <property type="match status" value="1"/>
</dbReference>
<keyword id="KW-1185">Reference proteome</keyword>
<keyword id="KW-0687">Ribonucleoprotein</keyword>
<keyword id="KW-0689">Ribosomal protein</keyword>
<sequence>MIVVPVKEGENIERALKRFKRKFEKTGAVRELRARQAFEKPSVAKRKKMQKAIYVKQLQVAEE</sequence>
<gene>
    <name evidence="1" type="primary">rpsU</name>
    <name type="ordered locus">PG_0385</name>
</gene>
<evidence type="ECO:0000255" key="1">
    <source>
        <dbReference type="HAMAP-Rule" id="MF_00358"/>
    </source>
</evidence>
<evidence type="ECO:0000305" key="2"/>
<protein>
    <recommendedName>
        <fullName evidence="1">Small ribosomal subunit protein bS21</fullName>
    </recommendedName>
    <alternativeName>
        <fullName evidence="2">30S ribosomal protein S21</fullName>
    </alternativeName>
</protein>